<sequence>MSHESHHSEGMATSGEVHEIREEEPEIETMHIENSVEGESGRQRTESTASVNSESWQNSDEMMMNMRRAQSLLDQGASCFQIIQQVFPEFDASRFENMSERVHFKVLSDLLERAPTRQKLFTYNSLSDAVDLFRTRKNILVLTGAGVSVSCGIPDFRSKDGIYARLRSEFPNLPDPTAMFDIRYFRDNPAPFYNFAREIFPGQFTPSVSHRFIKQLESSGRLLRNYTQNIDTLEHQTGIKRVVECHGSFSKCTCTSCGNQTDGMEIREDVLAMKVARCKICHGVIKPNIVFFGEDLGREFHRHVTEDKDKVDLIVVIGSSLKVRPVALIPHCVDKNVPQILINRESLPHYNADIELLGNCDDIVRDICYALGGSFAEMIASYDACVERSPSTSRAKRQLITQQEFLNICAQERRDKTPVPEPESSEPSTKRPRMSTTEDMEGNQFQQIQKHTSSEDDDEDNTRNSDEVLREIKHPRLISITDMLNDKKCVAISAYQTVFPGAECSFDMETLKLVHDVPHRNRHESDSSCESCSTVPGSDKSEANPLSRSQSTDDIVYAEIRRKEVFLDLQRCDSCDNDLQYELSDPIDPETFAKRIADMCIE</sequence>
<proteinExistence type="inferred from homology"/>
<gene>
    <name type="primary">sir-2.1</name>
    <name type="ORF">CBG23756</name>
</gene>
<keyword id="KW-0479">Metal-binding</keyword>
<keyword id="KW-0520">NAD</keyword>
<keyword id="KW-0539">Nucleus</keyword>
<keyword id="KW-1185">Reference proteome</keyword>
<keyword id="KW-0808">Transferase</keyword>
<keyword id="KW-0862">Zinc</keyword>
<dbReference type="EC" id="2.3.1.286" evidence="4"/>
<dbReference type="EMBL" id="HE601379">
    <property type="protein sequence ID" value="CAP20522.3"/>
    <property type="molecule type" value="Genomic_DNA"/>
</dbReference>
<dbReference type="SMR" id="Q60L58"/>
<dbReference type="STRING" id="6238.Q60L58"/>
<dbReference type="EnsemblMetazoa" id="CBG23756.1">
    <property type="protein sequence ID" value="CBG23756.1"/>
    <property type="gene ID" value="WBGene00042025"/>
</dbReference>
<dbReference type="KEGG" id="cbr:CBG_23756"/>
<dbReference type="CTD" id="8589890"/>
<dbReference type="WormBase" id="CBG23756">
    <property type="protein sequence ID" value="CBP24538"/>
    <property type="gene ID" value="WBGene00042025"/>
    <property type="gene designation" value="Cbr-sir-2.1"/>
</dbReference>
<dbReference type="eggNOG" id="KOG2684">
    <property type="taxonomic scope" value="Eukaryota"/>
</dbReference>
<dbReference type="HOGENOM" id="CLU_016587_1_0_1"/>
<dbReference type="OMA" id="FSKCTCT"/>
<dbReference type="Proteomes" id="UP000008549">
    <property type="component" value="Unassembled WGS sequence"/>
</dbReference>
<dbReference type="GO" id="GO:0000781">
    <property type="term" value="C:chromosome, telomeric region"/>
    <property type="evidence" value="ECO:0007669"/>
    <property type="project" value="EnsemblMetazoa"/>
</dbReference>
<dbReference type="GO" id="GO:0005637">
    <property type="term" value="C:nuclear inner membrane"/>
    <property type="evidence" value="ECO:0000318"/>
    <property type="project" value="GO_Central"/>
</dbReference>
<dbReference type="GO" id="GO:0005654">
    <property type="term" value="C:nucleoplasm"/>
    <property type="evidence" value="ECO:0000318"/>
    <property type="project" value="GO_Central"/>
</dbReference>
<dbReference type="GO" id="GO:0005634">
    <property type="term" value="C:nucleus"/>
    <property type="evidence" value="ECO:0000318"/>
    <property type="project" value="GO_Central"/>
</dbReference>
<dbReference type="GO" id="GO:0048471">
    <property type="term" value="C:perinuclear region of cytoplasm"/>
    <property type="evidence" value="ECO:0007669"/>
    <property type="project" value="EnsemblMetazoa"/>
</dbReference>
<dbReference type="GO" id="GO:0033553">
    <property type="term" value="C:rDNA heterochromatin"/>
    <property type="evidence" value="ECO:0000318"/>
    <property type="project" value="GO_Central"/>
</dbReference>
<dbReference type="GO" id="GO:0017136">
    <property type="term" value="F:histone deacetylase activity, NAD-dependent"/>
    <property type="evidence" value="ECO:0000318"/>
    <property type="project" value="GO_Central"/>
</dbReference>
<dbReference type="GO" id="GO:0141051">
    <property type="term" value="F:histone H4K deacetylase activity"/>
    <property type="evidence" value="ECO:0007669"/>
    <property type="project" value="EnsemblMetazoa"/>
</dbReference>
<dbReference type="GO" id="GO:0046872">
    <property type="term" value="F:metal ion binding"/>
    <property type="evidence" value="ECO:0007669"/>
    <property type="project" value="UniProtKB-KW"/>
</dbReference>
<dbReference type="GO" id="GO:0070403">
    <property type="term" value="F:NAD+ binding"/>
    <property type="evidence" value="ECO:0000318"/>
    <property type="project" value="GO_Central"/>
</dbReference>
<dbReference type="GO" id="GO:0002039">
    <property type="term" value="F:p53 binding"/>
    <property type="evidence" value="ECO:0000318"/>
    <property type="project" value="GO_Central"/>
</dbReference>
<dbReference type="GO" id="GO:0003714">
    <property type="term" value="F:transcription corepressor activity"/>
    <property type="evidence" value="ECO:0000318"/>
    <property type="project" value="GO_Central"/>
</dbReference>
<dbReference type="GO" id="GO:0040024">
    <property type="term" value="P:dauer larval development"/>
    <property type="evidence" value="ECO:0007669"/>
    <property type="project" value="EnsemblMetazoa"/>
</dbReference>
<dbReference type="GO" id="GO:0008340">
    <property type="term" value="P:determination of adult lifespan"/>
    <property type="evidence" value="ECO:0007669"/>
    <property type="project" value="EnsemblMetazoa"/>
</dbReference>
<dbReference type="GO" id="GO:0031507">
    <property type="term" value="P:heterochromatin formation"/>
    <property type="evidence" value="ECO:0000318"/>
    <property type="project" value="GO_Central"/>
</dbReference>
<dbReference type="GO" id="GO:0008630">
    <property type="term" value="P:intrinsic apoptotic signaling pathway in response to DNA damage"/>
    <property type="evidence" value="ECO:0007669"/>
    <property type="project" value="EnsemblMetazoa"/>
</dbReference>
<dbReference type="GO" id="GO:0045892">
    <property type="term" value="P:negative regulation of DNA-templated transcription"/>
    <property type="evidence" value="ECO:0000318"/>
    <property type="project" value="GO_Central"/>
</dbReference>
<dbReference type="CDD" id="cd01408">
    <property type="entry name" value="SIRT1"/>
    <property type="match status" value="1"/>
</dbReference>
<dbReference type="FunFam" id="3.30.1600.10:FF:000013">
    <property type="entry name" value="NAD-dependent protein deacetylase sirtuin-1"/>
    <property type="match status" value="1"/>
</dbReference>
<dbReference type="Gene3D" id="3.30.1600.10">
    <property type="entry name" value="SIR2/SIRT2 'Small Domain"/>
    <property type="match status" value="1"/>
</dbReference>
<dbReference type="Gene3D" id="3.40.50.1220">
    <property type="entry name" value="TPP-binding domain"/>
    <property type="match status" value="1"/>
</dbReference>
<dbReference type="InterPro" id="IPR029035">
    <property type="entry name" value="DHS-like_NAD/FAD-binding_dom"/>
</dbReference>
<dbReference type="InterPro" id="IPR050134">
    <property type="entry name" value="NAD-dep_sirtuin_deacylases"/>
</dbReference>
<dbReference type="InterPro" id="IPR003000">
    <property type="entry name" value="Sirtuin"/>
</dbReference>
<dbReference type="InterPro" id="IPR026591">
    <property type="entry name" value="Sirtuin_cat_small_dom_sf"/>
</dbReference>
<dbReference type="InterPro" id="IPR026590">
    <property type="entry name" value="Ssirtuin_cat_dom"/>
</dbReference>
<dbReference type="PANTHER" id="PTHR11085:SF9">
    <property type="entry name" value="NAD-DEPENDENT PROTEIN DEACETYLASE SIRTUIN-1"/>
    <property type="match status" value="1"/>
</dbReference>
<dbReference type="PANTHER" id="PTHR11085">
    <property type="entry name" value="NAD-DEPENDENT PROTEIN DEACYLASE SIRTUIN-5, MITOCHONDRIAL-RELATED"/>
    <property type="match status" value="1"/>
</dbReference>
<dbReference type="Pfam" id="PF02146">
    <property type="entry name" value="SIR2"/>
    <property type="match status" value="1"/>
</dbReference>
<dbReference type="SUPFAM" id="SSF52467">
    <property type="entry name" value="DHS-like NAD/FAD-binding domain"/>
    <property type="match status" value="1"/>
</dbReference>
<dbReference type="PROSITE" id="PS50305">
    <property type="entry name" value="SIRTUIN"/>
    <property type="match status" value="1"/>
</dbReference>
<comment type="function">
    <text evidence="3">NAD-dependent deacetylase. Required for a reduction of the 'Lys-16' acetylation of histone H4 (H4K16ac) on dosage-compensated X chromosomes in hermaphrodites. Functions upstream of daf-16 in the insulin-like signaling pathway, promoting daf-16 mediated transcriptional activation and increased life-span. May also regulate life-span independently of daf-16 by modulating the transcription of genes involved in the stress response of the endoplasmic reticulum (ER). Acts upstream of the nicotinic acid metabolism pathway, which may be linked to the regulation of longevity. Plays a role in ascaroside-mediated longevity and stress resistance.</text>
</comment>
<comment type="catalytic activity">
    <reaction evidence="4">
        <text>N(6)-acetyl-L-lysyl-[protein] + NAD(+) + H2O = 2''-O-acetyl-ADP-D-ribose + nicotinamide + L-lysyl-[protein]</text>
        <dbReference type="Rhea" id="RHEA:43636"/>
        <dbReference type="Rhea" id="RHEA-COMP:9752"/>
        <dbReference type="Rhea" id="RHEA-COMP:10731"/>
        <dbReference type="ChEBI" id="CHEBI:15377"/>
        <dbReference type="ChEBI" id="CHEBI:17154"/>
        <dbReference type="ChEBI" id="CHEBI:29969"/>
        <dbReference type="ChEBI" id="CHEBI:57540"/>
        <dbReference type="ChEBI" id="CHEBI:61930"/>
        <dbReference type="ChEBI" id="CHEBI:83767"/>
        <dbReference type="EC" id="2.3.1.286"/>
    </reaction>
</comment>
<comment type="cofactor">
    <cofactor evidence="1">
        <name>Zn(2+)</name>
        <dbReference type="ChEBI" id="CHEBI:29105"/>
    </cofactor>
    <text evidence="1">Binds 1 zinc ion per subunit.</text>
</comment>
<comment type="subunit">
    <text evidence="3">Interacts with ftt-2 and par-5. Interacts with daf-16 following heat-shock, which causes daf-16 to accumulate in the nucleus. Interaction with daf-16 is promoted by ftt-2.</text>
</comment>
<comment type="subcellular location">
    <subcellularLocation>
        <location evidence="3">Nucleus</location>
    </subcellularLocation>
</comment>
<comment type="similarity">
    <text evidence="6">Belongs to the sirtuin family. Class I subfamily.</text>
</comment>
<reference key="1">
    <citation type="journal article" date="2003" name="PLoS Biol.">
        <title>The genome sequence of Caenorhabditis briggsae: a platform for comparative genomics.</title>
        <authorList>
            <person name="Stein L.D."/>
            <person name="Bao Z."/>
            <person name="Blasiar D."/>
            <person name="Blumenthal T."/>
            <person name="Brent M.R."/>
            <person name="Chen N."/>
            <person name="Chinwalla A."/>
            <person name="Clarke L."/>
            <person name="Clee C."/>
            <person name="Coghlan A."/>
            <person name="Coulson A."/>
            <person name="D'Eustachio P."/>
            <person name="Fitch D.H.A."/>
            <person name="Fulton L.A."/>
            <person name="Fulton R.E."/>
            <person name="Griffiths-Jones S."/>
            <person name="Harris T.W."/>
            <person name="Hillier L.W."/>
            <person name="Kamath R."/>
            <person name="Kuwabara P.E."/>
            <person name="Mardis E.R."/>
            <person name="Marra M.A."/>
            <person name="Miner T.L."/>
            <person name="Minx P."/>
            <person name="Mullikin J.C."/>
            <person name="Plumb R.W."/>
            <person name="Rogers J."/>
            <person name="Schein J.E."/>
            <person name="Sohrmann M."/>
            <person name="Spieth J."/>
            <person name="Stajich J.E."/>
            <person name="Wei C."/>
            <person name="Willey D."/>
            <person name="Wilson R.K."/>
            <person name="Durbin R.M."/>
            <person name="Waterston R.H."/>
        </authorList>
    </citation>
    <scope>NUCLEOTIDE SEQUENCE [LARGE SCALE GENOMIC DNA]</scope>
    <source>
        <strain>AF16</strain>
    </source>
</reference>
<accession>Q60L58</accession>
<accession>A8WJ80</accession>
<protein>
    <recommendedName>
        <fullName>NAD-dependent protein deacetylase sir-2.1</fullName>
        <ecNumber evidence="4">2.3.1.286</ecNumber>
    </recommendedName>
    <alternativeName>
        <fullName>Protein sir-2.1</fullName>
    </alternativeName>
    <alternativeName>
        <fullName>Regulatory protein SIR2 homolog 1</fullName>
    </alternativeName>
</protein>
<evidence type="ECO:0000250" key="1">
    <source>
        <dbReference type="UniProtKB" id="P06700"/>
    </source>
</evidence>
<evidence type="ECO:0000250" key="2">
    <source>
        <dbReference type="UniProtKB" id="P53686"/>
    </source>
</evidence>
<evidence type="ECO:0000250" key="3">
    <source>
        <dbReference type="UniProtKB" id="Q21921"/>
    </source>
</evidence>
<evidence type="ECO:0000255" key="4">
    <source>
        <dbReference type="PROSITE-ProRule" id="PRU00236"/>
    </source>
</evidence>
<evidence type="ECO:0000256" key="5">
    <source>
        <dbReference type="SAM" id="MobiDB-lite"/>
    </source>
</evidence>
<evidence type="ECO:0000305" key="6"/>
<feature type="chain" id="PRO_0000249598" description="NAD-dependent protein deacetylase sir-2.1">
    <location>
        <begin position="1"/>
        <end position="602"/>
    </location>
</feature>
<feature type="domain" description="Deacetylase sirtuin-type" evidence="4">
    <location>
        <begin position="119"/>
        <end position="374"/>
    </location>
</feature>
<feature type="region of interest" description="Disordered" evidence="5">
    <location>
        <begin position="25"/>
        <end position="57"/>
    </location>
</feature>
<feature type="region of interest" description="Disordered" evidence="5">
    <location>
        <begin position="411"/>
        <end position="468"/>
    </location>
</feature>
<feature type="region of interest" description="Disordered" evidence="5">
    <location>
        <begin position="520"/>
        <end position="551"/>
    </location>
</feature>
<feature type="compositionally biased region" description="Polar residues" evidence="5">
    <location>
        <begin position="46"/>
        <end position="57"/>
    </location>
</feature>
<feature type="active site" description="Proton acceptor" evidence="4">
    <location>
        <position position="246"/>
    </location>
</feature>
<feature type="binding site" evidence="1">
    <location>
        <begin position="144"/>
        <end position="163"/>
    </location>
    <ligand>
        <name>NAD(+)</name>
        <dbReference type="ChEBI" id="CHEBI:57540"/>
    </ligand>
</feature>
<feature type="binding site" evidence="2">
    <location>
        <begin position="228"/>
        <end position="231"/>
    </location>
    <ligand>
        <name>NAD(+)</name>
        <dbReference type="ChEBI" id="CHEBI:57540"/>
    </ligand>
</feature>
<feature type="binding site" evidence="4">
    <location>
        <position position="254"/>
    </location>
    <ligand>
        <name>Zn(2+)</name>
        <dbReference type="ChEBI" id="CHEBI:29105"/>
    </ligand>
</feature>
<feature type="binding site" evidence="4">
    <location>
        <position position="257"/>
    </location>
    <ligand>
        <name>Zn(2+)</name>
        <dbReference type="ChEBI" id="CHEBI:29105"/>
    </ligand>
</feature>
<feature type="binding site" evidence="4">
    <location>
        <position position="278"/>
    </location>
    <ligand>
        <name>Zn(2+)</name>
        <dbReference type="ChEBI" id="CHEBI:29105"/>
    </ligand>
</feature>
<feature type="binding site" evidence="4">
    <location>
        <position position="281"/>
    </location>
    <ligand>
        <name>Zn(2+)</name>
        <dbReference type="ChEBI" id="CHEBI:29105"/>
    </ligand>
</feature>
<feature type="binding site" evidence="1">
    <location>
        <begin position="318"/>
        <end position="320"/>
    </location>
    <ligand>
        <name>NAD(+)</name>
        <dbReference type="ChEBI" id="CHEBI:57540"/>
    </ligand>
</feature>
<feature type="binding site" evidence="1">
    <location>
        <begin position="343"/>
        <end position="345"/>
    </location>
    <ligand>
        <name>NAD(+)</name>
        <dbReference type="ChEBI" id="CHEBI:57540"/>
    </ligand>
</feature>
<feature type="binding site" evidence="1">
    <location>
        <position position="360"/>
    </location>
    <ligand>
        <name>NAD(+)</name>
        <dbReference type="ChEBI" id="CHEBI:57540"/>
    </ligand>
</feature>
<organism>
    <name type="scientific">Caenorhabditis briggsae</name>
    <dbReference type="NCBI Taxonomy" id="6238"/>
    <lineage>
        <taxon>Eukaryota</taxon>
        <taxon>Metazoa</taxon>
        <taxon>Ecdysozoa</taxon>
        <taxon>Nematoda</taxon>
        <taxon>Chromadorea</taxon>
        <taxon>Rhabditida</taxon>
        <taxon>Rhabditina</taxon>
        <taxon>Rhabditomorpha</taxon>
        <taxon>Rhabditoidea</taxon>
        <taxon>Rhabditidae</taxon>
        <taxon>Peloderinae</taxon>
        <taxon>Caenorhabditis</taxon>
    </lineage>
</organism>
<name>SIR2_CAEBR</name>